<organism>
    <name type="scientific">Helicobacter pylori (strain ATCC 700392 / 26695)</name>
    <name type="common">Campylobacter pylori</name>
    <dbReference type="NCBI Taxonomy" id="85962"/>
    <lineage>
        <taxon>Bacteria</taxon>
        <taxon>Pseudomonadati</taxon>
        <taxon>Campylobacterota</taxon>
        <taxon>Epsilonproteobacteria</taxon>
        <taxon>Campylobacterales</taxon>
        <taxon>Helicobacteraceae</taxon>
        <taxon>Helicobacter</taxon>
    </lineage>
</organism>
<accession>P64275</accession>
<accession>P55978</accession>
<proteinExistence type="inferred from homology"/>
<keyword id="KW-0238">DNA-binding</keyword>
<keyword id="KW-1185">Reference proteome</keyword>
<keyword id="KW-0804">Transcription</keyword>
<keyword id="KW-0805">Transcription regulation</keyword>
<evidence type="ECO:0000255" key="1">
    <source>
        <dbReference type="HAMAP-Rule" id="MF_00105"/>
    </source>
</evidence>
<reference key="1">
    <citation type="journal article" date="1997" name="Nature">
        <title>The complete genome sequence of the gastric pathogen Helicobacter pylori.</title>
        <authorList>
            <person name="Tomb J.-F."/>
            <person name="White O."/>
            <person name="Kerlavage A.R."/>
            <person name="Clayton R.A."/>
            <person name="Sutton G.G."/>
            <person name="Fleischmann R.D."/>
            <person name="Ketchum K.A."/>
            <person name="Klenk H.-P."/>
            <person name="Gill S.R."/>
            <person name="Dougherty B.A."/>
            <person name="Nelson K.E."/>
            <person name="Quackenbush J."/>
            <person name="Zhou L."/>
            <person name="Kirkness E.F."/>
            <person name="Peterson S.N."/>
            <person name="Loftus B.J."/>
            <person name="Richardson D.L."/>
            <person name="Dodson R.J."/>
            <person name="Khalak H.G."/>
            <person name="Glodek A."/>
            <person name="McKenney K."/>
            <person name="FitzGerald L.M."/>
            <person name="Lee N."/>
            <person name="Adams M.D."/>
            <person name="Hickey E.K."/>
            <person name="Berg D.E."/>
            <person name="Gocayne J.D."/>
            <person name="Utterback T.R."/>
            <person name="Peterson J.D."/>
            <person name="Kelley J.M."/>
            <person name="Cotton M.D."/>
            <person name="Weidman J.F."/>
            <person name="Fujii C."/>
            <person name="Bowman C."/>
            <person name="Watthey L."/>
            <person name="Wallin E."/>
            <person name="Hayes W.S."/>
            <person name="Borodovsky M."/>
            <person name="Karp P.D."/>
            <person name="Smith H.O."/>
            <person name="Fraser C.M."/>
            <person name="Venter J.C."/>
        </authorList>
    </citation>
    <scope>NUCLEOTIDE SEQUENCE [LARGE SCALE GENOMIC DNA]</scope>
    <source>
        <strain>ATCC 700392 / 26695</strain>
    </source>
</reference>
<gene>
    <name evidence="1" type="primary">greA</name>
    <name type="ordered locus">HP_0866</name>
</gene>
<name>GREA_HELPY</name>
<feature type="chain" id="PRO_0000176931" description="Transcription elongation factor GreA">
    <location>
        <begin position="1"/>
        <end position="164"/>
    </location>
</feature>
<sequence length="164" mass="18199">MNKEPMSMHGYNKICAELKQLKEVERPNIVKEIDIARGHGDLKENAEYHAAKEKQRFIEARIVDLSEIVANAQVIDPSALAHNKVSFGSTIKILNLDNDKEFSYTIVGSVESDPAKGLISFGSPIAKSLIGKSKGDAVSIQLPNGESDFEILDIYYKEICFDEN</sequence>
<comment type="function">
    <text evidence="1">Necessary for efficient RNA polymerase transcription elongation past template-encoded arresting sites. The arresting sites in DNA have the property of trapping a certain fraction of elongating RNA polymerases that pass through, resulting in locked ternary complexes. Cleavage of the nascent transcript by cleavage factors such as GreA or GreB allows the resumption of elongation from the new 3'terminus. GreA releases sequences of 2 to 3 nucleotides.</text>
</comment>
<comment type="similarity">
    <text evidence="1">Belongs to the GreA/GreB family.</text>
</comment>
<protein>
    <recommendedName>
        <fullName evidence="1">Transcription elongation factor GreA</fullName>
    </recommendedName>
    <alternativeName>
        <fullName evidence="1">Transcript cleavage factor GreA</fullName>
    </alternativeName>
</protein>
<dbReference type="EMBL" id="AE000511">
    <property type="protein sequence ID" value="AAD07908.1"/>
    <property type="molecule type" value="Genomic_DNA"/>
</dbReference>
<dbReference type="PIR" id="B64628">
    <property type="entry name" value="B64628"/>
</dbReference>
<dbReference type="RefSeq" id="NP_207660.1">
    <property type="nucleotide sequence ID" value="NC_000915.1"/>
</dbReference>
<dbReference type="RefSeq" id="WP_001031337.1">
    <property type="nucleotide sequence ID" value="NC_018939.1"/>
</dbReference>
<dbReference type="SMR" id="P64275"/>
<dbReference type="FunCoup" id="P64275">
    <property type="interactions" value="353"/>
</dbReference>
<dbReference type="STRING" id="85962.HP_0866"/>
<dbReference type="PaxDb" id="85962-C694_04435"/>
<dbReference type="EnsemblBacteria" id="AAD07908">
    <property type="protein sequence ID" value="AAD07908"/>
    <property type="gene ID" value="HP_0866"/>
</dbReference>
<dbReference type="KEGG" id="heo:C694_04435"/>
<dbReference type="KEGG" id="hpy:HP_0866"/>
<dbReference type="PATRIC" id="fig|85962.47.peg.920"/>
<dbReference type="eggNOG" id="COG0782">
    <property type="taxonomic scope" value="Bacteria"/>
</dbReference>
<dbReference type="InParanoid" id="P64275"/>
<dbReference type="OrthoDB" id="9808774at2"/>
<dbReference type="PhylomeDB" id="P64275"/>
<dbReference type="Proteomes" id="UP000000429">
    <property type="component" value="Chromosome"/>
</dbReference>
<dbReference type="GO" id="GO:0003677">
    <property type="term" value="F:DNA binding"/>
    <property type="evidence" value="ECO:0007669"/>
    <property type="project" value="UniProtKB-UniRule"/>
</dbReference>
<dbReference type="GO" id="GO:0070063">
    <property type="term" value="F:RNA polymerase binding"/>
    <property type="evidence" value="ECO:0007669"/>
    <property type="project" value="InterPro"/>
</dbReference>
<dbReference type="GO" id="GO:0006354">
    <property type="term" value="P:DNA-templated transcription elongation"/>
    <property type="evidence" value="ECO:0000318"/>
    <property type="project" value="GO_Central"/>
</dbReference>
<dbReference type="GO" id="GO:0032784">
    <property type="term" value="P:regulation of DNA-templated transcription elongation"/>
    <property type="evidence" value="ECO:0007669"/>
    <property type="project" value="UniProtKB-UniRule"/>
</dbReference>
<dbReference type="FunFam" id="1.10.287.180:FF:000001">
    <property type="entry name" value="Transcription elongation factor GreA"/>
    <property type="match status" value="1"/>
</dbReference>
<dbReference type="FunFam" id="3.10.50.30:FF:000001">
    <property type="entry name" value="Transcription elongation factor GreA"/>
    <property type="match status" value="1"/>
</dbReference>
<dbReference type="Gene3D" id="3.10.50.30">
    <property type="entry name" value="Transcription elongation factor, GreA/GreB, C-terminal domain"/>
    <property type="match status" value="1"/>
</dbReference>
<dbReference type="Gene3D" id="1.10.287.180">
    <property type="entry name" value="Transcription elongation factor, GreA/GreB, N-terminal domain"/>
    <property type="match status" value="1"/>
</dbReference>
<dbReference type="HAMAP" id="MF_00105">
    <property type="entry name" value="GreA_GreB"/>
    <property type="match status" value="1"/>
</dbReference>
<dbReference type="InterPro" id="IPR036953">
    <property type="entry name" value="GreA/GreB_C_sf"/>
</dbReference>
<dbReference type="InterPro" id="IPR018151">
    <property type="entry name" value="TF_GreA/GreB_CS"/>
</dbReference>
<dbReference type="InterPro" id="IPR006359">
    <property type="entry name" value="Tscrpt_elong_fac_GreA"/>
</dbReference>
<dbReference type="InterPro" id="IPR028624">
    <property type="entry name" value="Tscrpt_elong_fac_GreA/B"/>
</dbReference>
<dbReference type="InterPro" id="IPR001437">
    <property type="entry name" value="Tscrpt_elong_fac_GreA/B_C"/>
</dbReference>
<dbReference type="InterPro" id="IPR023459">
    <property type="entry name" value="Tscrpt_elong_fac_GreA/B_fam"/>
</dbReference>
<dbReference type="InterPro" id="IPR022691">
    <property type="entry name" value="Tscrpt_elong_fac_GreA/B_N"/>
</dbReference>
<dbReference type="InterPro" id="IPR036805">
    <property type="entry name" value="Tscrpt_elong_fac_GreA/B_N_sf"/>
</dbReference>
<dbReference type="NCBIfam" id="TIGR01462">
    <property type="entry name" value="greA"/>
    <property type="match status" value="1"/>
</dbReference>
<dbReference type="NCBIfam" id="NF001261">
    <property type="entry name" value="PRK00226.1-2"/>
    <property type="match status" value="1"/>
</dbReference>
<dbReference type="NCBIfam" id="NF001263">
    <property type="entry name" value="PRK00226.1-4"/>
    <property type="match status" value="1"/>
</dbReference>
<dbReference type="NCBIfam" id="NF001264">
    <property type="entry name" value="PRK00226.1-5"/>
    <property type="match status" value="1"/>
</dbReference>
<dbReference type="PANTHER" id="PTHR30437">
    <property type="entry name" value="TRANSCRIPTION ELONGATION FACTOR GREA"/>
    <property type="match status" value="1"/>
</dbReference>
<dbReference type="PANTHER" id="PTHR30437:SF4">
    <property type="entry name" value="TRANSCRIPTION ELONGATION FACTOR GREA"/>
    <property type="match status" value="1"/>
</dbReference>
<dbReference type="Pfam" id="PF01272">
    <property type="entry name" value="GreA_GreB"/>
    <property type="match status" value="1"/>
</dbReference>
<dbReference type="Pfam" id="PF03449">
    <property type="entry name" value="GreA_GreB_N"/>
    <property type="match status" value="1"/>
</dbReference>
<dbReference type="PIRSF" id="PIRSF006092">
    <property type="entry name" value="GreA_GreB"/>
    <property type="match status" value="1"/>
</dbReference>
<dbReference type="SUPFAM" id="SSF54534">
    <property type="entry name" value="FKBP-like"/>
    <property type="match status" value="1"/>
</dbReference>
<dbReference type="SUPFAM" id="SSF46557">
    <property type="entry name" value="GreA transcript cleavage protein, N-terminal domain"/>
    <property type="match status" value="1"/>
</dbReference>
<dbReference type="PROSITE" id="PS00829">
    <property type="entry name" value="GREAB_1"/>
    <property type="match status" value="1"/>
</dbReference>
<dbReference type="PROSITE" id="PS00830">
    <property type="entry name" value="GREAB_2"/>
    <property type="match status" value="1"/>
</dbReference>